<dbReference type="EC" id="3.1.13.4"/>
<dbReference type="EMBL" id="DS027685">
    <property type="protein sequence ID" value="EAW24869.1"/>
    <property type="molecule type" value="Genomic_DNA"/>
</dbReference>
<dbReference type="RefSeq" id="XP_001266766.1">
    <property type="nucleotide sequence ID" value="XM_001266765.1"/>
</dbReference>
<dbReference type="SMR" id="A1CW67"/>
<dbReference type="STRING" id="331117.A1CW67"/>
<dbReference type="EnsemblFungi" id="EAW24869">
    <property type="protein sequence ID" value="EAW24869"/>
    <property type="gene ID" value="NFIA_103570"/>
</dbReference>
<dbReference type="GeneID" id="4593323"/>
<dbReference type="KEGG" id="nfi:NFIA_103570"/>
<dbReference type="VEuPathDB" id="FungiDB:NFIA_103570"/>
<dbReference type="eggNOG" id="KOG0620">
    <property type="taxonomic scope" value="Eukaryota"/>
</dbReference>
<dbReference type="HOGENOM" id="CLU_016428_4_0_1"/>
<dbReference type="OMA" id="PHYYARA"/>
<dbReference type="OrthoDB" id="428734at2759"/>
<dbReference type="Proteomes" id="UP000006702">
    <property type="component" value="Unassembled WGS sequence"/>
</dbReference>
<dbReference type="GO" id="GO:0030015">
    <property type="term" value="C:CCR4-NOT core complex"/>
    <property type="evidence" value="ECO:0007669"/>
    <property type="project" value="EnsemblFungi"/>
</dbReference>
<dbReference type="GO" id="GO:0016593">
    <property type="term" value="C:Cdc73/Paf1 complex"/>
    <property type="evidence" value="ECO:0007669"/>
    <property type="project" value="EnsemblFungi"/>
</dbReference>
<dbReference type="GO" id="GO:0000932">
    <property type="term" value="C:P-body"/>
    <property type="evidence" value="ECO:0007669"/>
    <property type="project" value="EnsemblFungi"/>
</dbReference>
<dbReference type="GO" id="GO:0046872">
    <property type="term" value="F:metal ion binding"/>
    <property type="evidence" value="ECO:0007669"/>
    <property type="project" value="UniProtKB-KW"/>
</dbReference>
<dbReference type="GO" id="GO:0004535">
    <property type="term" value="F:poly(A)-specific ribonuclease activity"/>
    <property type="evidence" value="ECO:0007669"/>
    <property type="project" value="UniProtKB-EC"/>
</dbReference>
<dbReference type="GO" id="GO:0003723">
    <property type="term" value="F:RNA binding"/>
    <property type="evidence" value="ECO:0007669"/>
    <property type="project" value="UniProtKB-KW"/>
</dbReference>
<dbReference type="GO" id="GO:0006260">
    <property type="term" value="P:DNA replication"/>
    <property type="evidence" value="ECO:0007669"/>
    <property type="project" value="EnsemblFungi"/>
</dbReference>
<dbReference type="GO" id="GO:0000076">
    <property type="term" value="P:DNA replication checkpoint signaling"/>
    <property type="evidence" value="ECO:0007669"/>
    <property type="project" value="EnsemblFungi"/>
</dbReference>
<dbReference type="GO" id="GO:0000289">
    <property type="term" value="P:nuclear-transcribed mRNA poly(A) tail shortening"/>
    <property type="evidence" value="ECO:0007669"/>
    <property type="project" value="EnsemblFungi"/>
</dbReference>
<dbReference type="GO" id="GO:0032968">
    <property type="term" value="P:positive regulation of transcription elongation by RNA polymerase II"/>
    <property type="evidence" value="ECO:0007669"/>
    <property type="project" value="EnsemblFungi"/>
</dbReference>
<dbReference type="GO" id="GO:0006368">
    <property type="term" value="P:transcription elongation by RNA polymerase II"/>
    <property type="evidence" value="ECO:0007669"/>
    <property type="project" value="EnsemblFungi"/>
</dbReference>
<dbReference type="GO" id="GO:0007089">
    <property type="term" value="P:traversing start control point of mitotic cell cycle"/>
    <property type="evidence" value="ECO:0007669"/>
    <property type="project" value="EnsemblFungi"/>
</dbReference>
<dbReference type="CDD" id="cd09097">
    <property type="entry name" value="Deadenylase_CCR4"/>
    <property type="match status" value="1"/>
</dbReference>
<dbReference type="FunFam" id="3.60.10.10:FF:000037">
    <property type="entry name" value="Glucose-repressible alcohol dehydrogenase transcriptional effector"/>
    <property type="match status" value="1"/>
</dbReference>
<dbReference type="FunFam" id="3.80.10.10:FF:000447">
    <property type="entry name" value="Glucose-repressible alcohol dehydrogenase transcriptional effector"/>
    <property type="match status" value="1"/>
</dbReference>
<dbReference type="Gene3D" id="3.60.10.10">
    <property type="entry name" value="Endonuclease/exonuclease/phosphatase"/>
    <property type="match status" value="1"/>
</dbReference>
<dbReference type="Gene3D" id="3.80.10.10">
    <property type="entry name" value="Ribonuclease Inhibitor"/>
    <property type="match status" value="1"/>
</dbReference>
<dbReference type="InterPro" id="IPR050410">
    <property type="entry name" value="CCR4/nocturin_mRNA_transcr"/>
</dbReference>
<dbReference type="InterPro" id="IPR036691">
    <property type="entry name" value="Endo/exonu/phosph_ase_sf"/>
</dbReference>
<dbReference type="InterPro" id="IPR005135">
    <property type="entry name" value="Endo/exonuclease/phosphatase"/>
</dbReference>
<dbReference type="InterPro" id="IPR001611">
    <property type="entry name" value="Leu-rich_rpt"/>
</dbReference>
<dbReference type="InterPro" id="IPR003591">
    <property type="entry name" value="Leu-rich_rpt_typical-subtyp"/>
</dbReference>
<dbReference type="InterPro" id="IPR032675">
    <property type="entry name" value="LRR_dom_sf"/>
</dbReference>
<dbReference type="PANTHER" id="PTHR12121">
    <property type="entry name" value="CARBON CATABOLITE REPRESSOR PROTEIN 4"/>
    <property type="match status" value="1"/>
</dbReference>
<dbReference type="PANTHER" id="PTHR12121:SF100">
    <property type="entry name" value="POLY(A)-SPECIFIC RIBONUCLEASE"/>
    <property type="match status" value="1"/>
</dbReference>
<dbReference type="Pfam" id="PF03372">
    <property type="entry name" value="Exo_endo_phos"/>
    <property type="match status" value="1"/>
</dbReference>
<dbReference type="Pfam" id="PF13855">
    <property type="entry name" value="LRR_8"/>
    <property type="match status" value="1"/>
</dbReference>
<dbReference type="SMART" id="SM00369">
    <property type="entry name" value="LRR_TYP"/>
    <property type="match status" value="3"/>
</dbReference>
<dbReference type="SUPFAM" id="SSF56219">
    <property type="entry name" value="DNase I-like"/>
    <property type="match status" value="1"/>
</dbReference>
<dbReference type="SUPFAM" id="SSF52058">
    <property type="entry name" value="L domain-like"/>
    <property type="match status" value="1"/>
</dbReference>
<dbReference type="PROSITE" id="PS51450">
    <property type="entry name" value="LRR"/>
    <property type="match status" value="4"/>
</dbReference>
<keyword id="KW-0963">Cytoplasm</keyword>
<keyword id="KW-0269">Exonuclease</keyword>
<keyword id="KW-0378">Hydrolase</keyword>
<keyword id="KW-0433">Leucine-rich repeat</keyword>
<keyword id="KW-0460">Magnesium</keyword>
<keyword id="KW-0479">Metal-binding</keyword>
<keyword id="KW-0540">Nuclease</keyword>
<keyword id="KW-0539">Nucleus</keyword>
<keyword id="KW-1185">Reference proteome</keyword>
<keyword id="KW-0677">Repeat</keyword>
<keyword id="KW-0694">RNA-binding</keyword>
<keyword id="KW-0804">Transcription</keyword>
<keyword id="KW-0805">Transcription regulation</keyword>
<reference key="1">
    <citation type="journal article" date="2008" name="PLoS Genet.">
        <title>Genomic islands in the pathogenic filamentous fungus Aspergillus fumigatus.</title>
        <authorList>
            <person name="Fedorova N.D."/>
            <person name="Khaldi N."/>
            <person name="Joardar V.S."/>
            <person name="Maiti R."/>
            <person name="Amedeo P."/>
            <person name="Anderson M.J."/>
            <person name="Crabtree J."/>
            <person name="Silva J.C."/>
            <person name="Badger J.H."/>
            <person name="Albarraq A."/>
            <person name="Angiuoli S."/>
            <person name="Bussey H."/>
            <person name="Bowyer P."/>
            <person name="Cotty P.J."/>
            <person name="Dyer P.S."/>
            <person name="Egan A."/>
            <person name="Galens K."/>
            <person name="Fraser-Liggett C.M."/>
            <person name="Haas B.J."/>
            <person name="Inman J.M."/>
            <person name="Kent R."/>
            <person name="Lemieux S."/>
            <person name="Malavazi I."/>
            <person name="Orvis J."/>
            <person name="Roemer T."/>
            <person name="Ronning C.M."/>
            <person name="Sundaram J.P."/>
            <person name="Sutton G."/>
            <person name="Turner G."/>
            <person name="Venter J.C."/>
            <person name="White O.R."/>
            <person name="Whitty B.R."/>
            <person name="Youngman P."/>
            <person name="Wolfe K.H."/>
            <person name="Goldman G.H."/>
            <person name="Wortman J.R."/>
            <person name="Jiang B."/>
            <person name="Denning D.W."/>
            <person name="Nierman W.C."/>
        </authorList>
    </citation>
    <scope>NUCLEOTIDE SEQUENCE [LARGE SCALE GENOMIC DNA]</scope>
    <source>
        <strain>ATCC 1020 / DSM 3700 / CBS 544.65 / FGSC A1164 / JCM 1740 / NRRL 181 / WB 181</strain>
    </source>
</reference>
<comment type="function">
    <text evidence="3">Acts as a catalytic component of the CCR4-NOT core complex, which in the nucleus seems to be a general transcription factor, and in the cytoplasm the major mRNA deadenylase involved in mRNA turnover (By similarity). Ccr4 has 3'-5' RNase activity with a strong preference for polyadenylated substrates and also low exonuclease activity towards single-stranded DNA (By similarity).</text>
</comment>
<comment type="catalytic activity">
    <reaction>
        <text>Exonucleolytic cleavage of poly(A) to 5'-AMP.</text>
        <dbReference type="EC" id="3.1.13.4"/>
    </reaction>
</comment>
<comment type="cofactor">
    <cofactor evidence="1">
        <name>Mg(2+)</name>
        <dbReference type="ChEBI" id="CHEBI:18420"/>
    </cofactor>
</comment>
<comment type="subcellular location">
    <subcellularLocation>
        <location evidence="1">Cytoplasm</location>
    </subcellularLocation>
    <subcellularLocation>
        <location evidence="1">Nucleus</location>
    </subcellularLocation>
</comment>
<comment type="similarity">
    <text evidence="5">Belongs to the CCR4/nocturin family.</text>
</comment>
<organism>
    <name type="scientific">Neosartorya fischeri (strain ATCC 1020 / DSM 3700 / CBS 544.65 / FGSC A1164 / JCM 1740 / NRRL 181 / WB 181)</name>
    <name type="common">Aspergillus fischerianus</name>
    <dbReference type="NCBI Taxonomy" id="331117"/>
    <lineage>
        <taxon>Eukaryota</taxon>
        <taxon>Fungi</taxon>
        <taxon>Dikarya</taxon>
        <taxon>Ascomycota</taxon>
        <taxon>Pezizomycotina</taxon>
        <taxon>Eurotiomycetes</taxon>
        <taxon>Eurotiomycetidae</taxon>
        <taxon>Eurotiales</taxon>
        <taxon>Aspergillaceae</taxon>
        <taxon>Aspergillus</taxon>
        <taxon>Aspergillus subgen. Fumigati</taxon>
    </lineage>
</organism>
<feature type="chain" id="PRO_0000290614" description="CCR4-Not complex 3'-5'-exoribonuclease subunit Ccr4">
    <location>
        <begin position="1"/>
        <end position="750"/>
    </location>
</feature>
<feature type="repeat" description="LRR 1">
    <location>
        <begin position="249"/>
        <end position="270"/>
    </location>
</feature>
<feature type="repeat" description="LRR 2">
    <location>
        <begin position="272"/>
        <end position="293"/>
    </location>
</feature>
<feature type="repeat" description="LRR 3">
    <location>
        <begin position="295"/>
        <end position="316"/>
    </location>
</feature>
<feature type="repeat" description="LRR 4">
    <location>
        <begin position="318"/>
        <end position="339"/>
    </location>
</feature>
<feature type="region of interest" description="Disordered" evidence="4">
    <location>
        <begin position="31"/>
        <end position="60"/>
    </location>
</feature>
<feature type="region of interest" description="Disordered" evidence="4">
    <location>
        <begin position="98"/>
        <end position="124"/>
    </location>
</feature>
<feature type="region of interest" description="Disordered" evidence="4">
    <location>
        <begin position="175"/>
        <end position="194"/>
    </location>
</feature>
<feature type="compositionally biased region" description="Polar residues" evidence="4">
    <location>
        <begin position="48"/>
        <end position="58"/>
    </location>
</feature>
<feature type="compositionally biased region" description="Basic residues" evidence="4">
    <location>
        <begin position="102"/>
        <end position="118"/>
    </location>
</feature>
<feature type="binding site" evidence="2">
    <location>
        <position position="432"/>
    </location>
    <ligand>
        <name>Mg(2+)</name>
        <dbReference type="ChEBI" id="CHEBI:18420"/>
    </ligand>
</feature>
<protein>
    <recommendedName>
        <fullName evidence="5">CCR4-Not complex 3'-5'-exoribonuclease subunit Ccr4</fullName>
        <ecNumber>3.1.13.4</ecNumber>
    </recommendedName>
    <alternativeName>
        <fullName>Carbon catabolite repressor protein 4</fullName>
    </alternativeName>
    <alternativeName>
        <fullName>Cytoplasmic deadenylase</fullName>
    </alternativeName>
    <alternativeName>
        <fullName>Glucose-repressible alcohol dehydrogenase transcriptional effector</fullName>
    </alternativeName>
</protein>
<accession>A1CW67</accession>
<evidence type="ECO:0000250" key="1"/>
<evidence type="ECO:0000250" key="2">
    <source>
        <dbReference type="UniProtKB" id="O95551"/>
    </source>
</evidence>
<evidence type="ECO:0000250" key="3">
    <source>
        <dbReference type="UniProtKB" id="P31384"/>
    </source>
</evidence>
<evidence type="ECO:0000256" key="4">
    <source>
        <dbReference type="SAM" id="MobiDB-lite"/>
    </source>
</evidence>
<evidence type="ECO:0000305" key="5"/>
<sequence>MADGTYRFQQPGAGQFFFQTQPQQHSHQRHIARNGTNSPTGRLKFNHDTPSPSRSPPLSQAAALNPFNMYSQTHQGQHVMMNGGQAHQRFGMQIPKFQSQSHHPHHTQQPHHHTHHNQASHNINHQHNFSSGALASATPHFTPSHIQNGAHTNVDEDIDESMNEHWQQQLQLAAESRQASSPHYHARSVAQQAKGIQIAPSQPETQEQVPDGQNGVVKAKASSRQGWHALDFGGQGLRALSTSLFNYVFLEKLYLNHNKLKALPPTIGQLRKLNHLDLSGNDLTELPEEIGMLTNLKKLYLFDNNIRTLPYEMGYLYRLETLGVEGNPLNDVLKSHIMKEGTKALIKYLKEEMPVHLPPPDRDWIVLDETASSSNHRTDKVTVLSYNTLCDSSATQSHYGYAPARVLSWEFRRELILNELRSHDSDIICLQEIDQGSYNEYFREQLAYNDYKGVYWPRGRAMGMQEEDAKCVDGCATFFKASKFILLDKQLINFGQTAVRRPDAKGQDDIYNRLWQKDHIAVVVFLENRQTGSRFIVVNAHLYWDPAFKDVKLIQTAILMEELTKLSETYAKWPPCTDKAAFRFSKEEGQSETPPLEEPAPSMQYASGDQIPLLMCGDLNSSPGSAAYNLIAHGRLDEEHPDLEKRLYGNLSKVGMTHPFKLKSAYGAIGELPFTNYTPDFKDILDYIWYSSNSLHVSALLGEVDKDYLQRVPGFPNYHFPSDHIALLAEFTVKGKKGKVVEADFGPQRN</sequence>
<gene>
    <name type="primary">ccr4</name>
    <name type="ORF">NFIA_103570</name>
</gene>
<name>CCR4_NEOFI</name>
<proteinExistence type="inferred from homology"/>